<feature type="chain" id="PRO_0000227355" description="UvrABC system protein B">
    <location>
        <begin position="1"/>
        <end position="661"/>
    </location>
</feature>
<feature type="domain" description="Helicase ATP-binding" evidence="1">
    <location>
        <begin position="25"/>
        <end position="414"/>
    </location>
</feature>
<feature type="domain" description="Helicase C-terminal" evidence="1">
    <location>
        <begin position="430"/>
        <end position="592"/>
    </location>
</feature>
<feature type="domain" description="UVR" evidence="1">
    <location>
        <begin position="621"/>
        <end position="656"/>
    </location>
</feature>
<feature type="short sequence motif" description="Beta-hairpin">
    <location>
        <begin position="91"/>
        <end position="114"/>
    </location>
</feature>
<feature type="binding site" evidence="1">
    <location>
        <begin position="38"/>
        <end position="45"/>
    </location>
    <ligand>
        <name>ATP</name>
        <dbReference type="ChEBI" id="CHEBI:30616"/>
    </ligand>
</feature>
<protein>
    <recommendedName>
        <fullName evidence="1">UvrABC system protein B</fullName>
        <shortName evidence="1">Protein UvrB</shortName>
    </recommendedName>
    <alternativeName>
        <fullName evidence="1">Excinuclease ABC subunit B</fullName>
    </alternativeName>
</protein>
<accession>Q4UKL6</accession>
<proteinExistence type="inferred from homology"/>
<sequence>MNNFSIISEYKPAGDQPKAIDEIIAGLNSKKRSQMLLGITGSGKTFTMANIIERTNRPTLIMAHNKTLAAQIYSEMKSIFPKNAVEYFVSYYDYYQPEAYIARTDTFIEKDSSINEQIDLMRHSATRSLLERRDVIVVSSVSCIYGLGSPDLYYQMTVNLEPGKSYPRDKLLNDLINLQYERNDIGFERGCFRVKGDNIDIFPSHYSDKAWRLSFFGNELEYIHEFDPLTGEKLAKLDKAMVFGNSHFVMPQETVNSAISGIEEELQKRLEFLKSQDKPLETQRLNQRTQYDLEMLTETGSCKGVENYSRFFTGRNAGEPPPTLFEYLPEDALLFVDESHVSVPQIRAMYNGDRARKEVLVEHGFRLPSALDNRPLKFEEWEKFRPQTVFVSATPGPFELEETGDTVVELIIRPTGLLDPECIIKPATNQVEDLIGEIQATIAKGFRVLVTTLTKKMAEDLTAYLQELKYKTSYLHSNIHTLERIEILRDLRQGTIDILVGINLLREGLDIPECGLVAILDADKEGFLRSEVSLIQTIGRAARNSEGRVILYADKMTKSIDKAMSETSRRRQIQQEYNEKHGIIPKTINRAIHALAELEKVDSKLDKKQAHTLFDNPAKLKAHIEKLKKDMLKAASNLEFEQAAKLRDQLKTLEEAALELS</sequence>
<organism>
    <name type="scientific">Rickettsia felis (strain ATCC VR-1525 / URRWXCal2)</name>
    <name type="common">Rickettsia azadi</name>
    <dbReference type="NCBI Taxonomy" id="315456"/>
    <lineage>
        <taxon>Bacteria</taxon>
        <taxon>Pseudomonadati</taxon>
        <taxon>Pseudomonadota</taxon>
        <taxon>Alphaproteobacteria</taxon>
        <taxon>Rickettsiales</taxon>
        <taxon>Rickettsiaceae</taxon>
        <taxon>Rickettsieae</taxon>
        <taxon>Rickettsia</taxon>
        <taxon>spotted fever group</taxon>
    </lineage>
</organism>
<dbReference type="EMBL" id="CP000053">
    <property type="protein sequence ID" value="AAY61911.1"/>
    <property type="molecule type" value="Genomic_DNA"/>
</dbReference>
<dbReference type="SMR" id="Q4UKL6"/>
<dbReference type="STRING" id="315456.RF_1060"/>
<dbReference type="KEGG" id="rfe:RF_1060"/>
<dbReference type="eggNOG" id="COG0556">
    <property type="taxonomic scope" value="Bacteria"/>
</dbReference>
<dbReference type="HOGENOM" id="CLU_009621_2_1_5"/>
<dbReference type="OrthoDB" id="9806651at2"/>
<dbReference type="Proteomes" id="UP000008548">
    <property type="component" value="Chromosome"/>
</dbReference>
<dbReference type="GO" id="GO:0005737">
    <property type="term" value="C:cytoplasm"/>
    <property type="evidence" value="ECO:0007669"/>
    <property type="project" value="UniProtKB-SubCell"/>
</dbReference>
<dbReference type="GO" id="GO:0009380">
    <property type="term" value="C:excinuclease repair complex"/>
    <property type="evidence" value="ECO:0007669"/>
    <property type="project" value="InterPro"/>
</dbReference>
<dbReference type="GO" id="GO:0005524">
    <property type="term" value="F:ATP binding"/>
    <property type="evidence" value="ECO:0007669"/>
    <property type="project" value="UniProtKB-UniRule"/>
</dbReference>
<dbReference type="GO" id="GO:0016887">
    <property type="term" value="F:ATP hydrolysis activity"/>
    <property type="evidence" value="ECO:0007669"/>
    <property type="project" value="InterPro"/>
</dbReference>
<dbReference type="GO" id="GO:0003677">
    <property type="term" value="F:DNA binding"/>
    <property type="evidence" value="ECO:0007669"/>
    <property type="project" value="UniProtKB-UniRule"/>
</dbReference>
<dbReference type="GO" id="GO:0009381">
    <property type="term" value="F:excinuclease ABC activity"/>
    <property type="evidence" value="ECO:0007669"/>
    <property type="project" value="UniProtKB-UniRule"/>
</dbReference>
<dbReference type="GO" id="GO:0006289">
    <property type="term" value="P:nucleotide-excision repair"/>
    <property type="evidence" value="ECO:0007669"/>
    <property type="project" value="UniProtKB-UniRule"/>
</dbReference>
<dbReference type="GO" id="GO:0009432">
    <property type="term" value="P:SOS response"/>
    <property type="evidence" value="ECO:0007669"/>
    <property type="project" value="UniProtKB-UniRule"/>
</dbReference>
<dbReference type="CDD" id="cd17916">
    <property type="entry name" value="DEXHc_UvrB"/>
    <property type="match status" value="1"/>
</dbReference>
<dbReference type="CDD" id="cd18790">
    <property type="entry name" value="SF2_C_UvrB"/>
    <property type="match status" value="1"/>
</dbReference>
<dbReference type="Gene3D" id="3.40.50.300">
    <property type="entry name" value="P-loop containing nucleotide triphosphate hydrolases"/>
    <property type="match status" value="3"/>
</dbReference>
<dbReference type="Gene3D" id="4.10.860.10">
    <property type="entry name" value="UVR domain"/>
    <property type="match status" value="1"/>
</dbReference>
<dbReference type="HAMAP" id="MF_00204">
    <property type="entry name" value="UvrB"/>
    <property type="match status" value="1"/>
</dbReference>
<dbReference type="InterPro" id="IPR006935">
    <property type="entry name" value="Helicase/UvrB_N"/>
</dbReference>
<dbReference type="InterPro" id="IPR014001">
    <property type="entry name" value="Helicase_ATP-bd"/>
</dbReference>
<dbReference type="InterPro" id="IPR001650">
    <property type="entry name" value="Helicase_C-like"/>
</dbReference>
<dbReference type="InterPro" id="IPR027417">
    <property type="entry name" value="P-loop_NTPase"/>
</dbReference>
<dbReference type="InterPro" id="IPR001943">
    <property type="entry name" value="UVR_dom"/>
</dbReference>
<dbReference type="InterPro" id="IPR036876">
    <property type="entry name" value="UVR_dom_sf"/>
</dbReference>
<dbReference type="InterPro" id="IPR004807">
    <property type="entry name" value="UvrB"/>
</dbReference>
<dbReference type="InterPro" id="IPR041471">
    <property type="entry name" value="UvrB_inter"/>
</dbReference>
<dbReference type="InterPro" id="IPR024759">
    <property type="entry name" value="UvrB_YAD/RRR_dom"/>
</dbReference>
<dbReference type="NCBIfam" id="NF003673">
    <property type="entry name" value="PRK05298.1"/>
    <property type="match status" value="1"/>
</dbReference>
<dbReference type="NCBIfam" id="TIGR00631">
    <property type="entry name" value="uvrb"/>
    <property type="match status" value="1"/>
</dbReference>
<dbReference type="PANTHER" id="PTHR24029">
    <property type="entry name" value="UVRABC SYSTEM PROTEIN B"/>
    <property type="match status" value="1"/>
</dbReference>
<dbReference type="PANTHER" id="PTHR24029:SF0">
    <property type="entry name" value="UVRABC SYSTEM PROTEIN B"/>
    <property type="match status" value="1"/>
</dbReference>
<dbReference type="Pfam" id="PF00271">
    <property type="entry name" value="Helicase_C"/>
    <property type="match status" value="1"/>
</dbReference>
<dbReference type="Pfam" id="PF04851">
    <property type="entry name" value="ResIII"/>
    <property type="match status" value="1"/>
</dbReference>
<dbReference type="Pfam" id="PF02151">
    <property type="entry name" value="UVR"/>
    <property type="match status" value="1"/>
</dbReference>
<dbReference type="Pfam" id="PF12344">
    <property type="entry name" value="UvrB"/>
    <property type="match status" value="1"/>
</dbReference>
<dbReference type="Pfam" id="PF17757">
    <property type="entry name" value="UvrB_inter"/>
    <property type="match status" value="1"/>
</dbReference>
<dbReference type="SMART" id="SM00487">
    <property type="entry name" value="DEXDc"/>
    <property type="match status" value="1"/>
</dbReference>
<dbReference type="SMART" id="SM00490">
    <property type="entry name" value="HELICc"/>
    <property type="match status" value="1"/>
</dbReference>
<dbReference type="SUPFAM" id="SSF46600">
    <property type="entry name" value="C-terminal UvrC-binding domain of UvrB"/>
    <property type="match status" value="1"/>
</dbReference>
<dbReference type="SUPFAM" id="SSF52540">
    <property type="entry name" value="P-loop containing nucleoside triphosphate hydrolases"/>
    <property type="match status" value="2"/>
</dbReference>
<dbReference type="PROSITE" id="PS51192">
    <property type="entry name" value="HELICASE_ATP_BIND_1"/>
    <property type="match status" value="1"/>
</dbReference>
<dbReference type="PROSITE" id="PS51194">
    <property type="entry name" value="HELICASE_CTER"/>
    <property type="match status" value="1"/>
</dbReference>
<dbReference type="PROSITE" id="PS50151">
    <property type="entry name" value="UVR"/>
    <property type="match status" value="1"/>
</dbReference>
<gene>
    <name evidence="1" type="primary">uvrB</name>
    <name type="ordered locus">RF_1060</name>
</gene>
<comment type="function">
    <text evidence="1">The UvrABC repair system catalyzes the recognition and processing of DNA lesions. A damage recognition complex composed of 2 UvrA and 2 UvrB subunits scans DNA for abnormalities. Upon binding of the UvrA(2)B(2) complex to a putative damaged site, the DNA wraps around one UvrB monomer. DNA wrap is dependent on ATP binding by UvrB and probably causes local melting of the DNA helix, facilitating insertion of UvrB beta-hairpin between the DNA strands. Then UvrB probes one DNA strand for the presence of a lesion. If a lesion is found the UvrA subunits dissociate and the UvrB-DNA preincision complex is formed. This complex is subsequently bound by UvrC and the second UvrB is released. If no lesion is found, the DNA wraps around the other UvrB subunit that will check the other stand for damage.</text>
</comment>
<comment type="subunit">
    <text evidence="1">Forms a heterotetramer with UvrA during the search for lesions. Interacts with UvrC in an incision complex.</text>
</comment>
<comment type="subcellular location">
    <subcellularLocation>
        <location evidence="1">Cytoplasm</location>
    </subcellularLocation>
</comment>
<comment type="domain">
    <text evidence="1">The beta-hairpin motif is involved in DNA binding.</text>
</comment>
<comment type="similarity">
    <text evidence="1">Belongs to the UvrB family.</text>
</comment>
<reference key="1">
    <citation type="journal article" date="2005" name="PLoS Biol.">
        <title>The genome sequence of Rickettsia felis identifies the first putative conjugative plasmid in an obligate intracellular parasite.</title>
        <authorList>
            <person name="Ogata H."/>
            <person name="Renesto P."/>
            <person name="Audic S."/>
            <person name="Robert C."/>
            <person name="Blanc G."/>
            <person name="Fournier P.-E."/>
            <person name="Parinello H."/>
            <person name="Claverie J.-M."/>
            <person name="Raoult D."/>
        </authorList>
    </citation>
    <scope>NUCLEOTIDE SEQUENCE [LARGE SCALE GENOMIC DNA]</scope>
    <source>
        <strain>ATCC VR-1525 / URRWXCal2</strain>
    </source>
</reference>
<name>UVRB_RICFE</name>
<keyword id="KW-0067">ATP-binding</keyword>
<keyword id="KW-0963">Cytoplasm</keyword>
<keyword id="KW-0227">DNA damage</keyword>
<keyword id="KW-0228">DNA excision</keyword>
<keyword id="KW-0234">DNA repair</keyword>
<keyword id="KW-0267">Excision nuclease</keyword>
<keyword id="KW-0547">Nucleotide-binding</keyword>
<keyword id="KW-0742">SOS response</keyword>
<evidence type="ECO:0000255" key="1">
    <source>
        <dbReference type="HAMAP-Rule" id="MF_00204"/>
    </source>
</evidence>